<feature type="chain" id="PRO_0000058417" description="Phytanoyl-CoA hydroxylase-interacting protein">
    <location>
        <begin position="1"/>
        <end position="330"/>
    </location>
</feature>
<feature type="domain" description="Fibronectin type-III" evidence="1">
    <location>
        <begin position="6"/>
        <end position="115"/>
    </location>
</feature>
<feature type="glycosylation site" description="N-linked (GlcNAc...) asparagine" evidence="4">
    <location>
        <position position="14"/>
    </location>
</feature>
<feature type="glycosylation site" description="N-linked (GlcNAc...) asparagine" evidence="4">
    <location>
        <position position="325"/>
    </location>
</feature>
<protein>
    <recommendedName>
        <fullName>Phytanoyl-CoA hydroxylase-interacting protein</fullName>
    </recommendedName>
    <alternativeName>
        <fullName>Phytanoyl-CoA hydroxylase-associated protein 1</fullName>
        <shortName>PAHX-AP1</shortName>
        <shortName>PAHXAP1</shortName>
    </alternativeName>
</protein>
<name>PHYIP_MOUSE</name>
<reference evidence="4" key="1">
    <citation type="journal article" date="2000" name="Brain Res. Mol. Brain Res.">
        <title>Identification of a brain specific protein that associates with a Refsum disease gene product, phytanoyl-CoA alpha-hydroxylase.</title>
        <authorList>
            <person name="Lee Z.H."/>
            <person name="Kim H.-H."/>
            <person name="Ahn K.Y."/>
            <person name="Seo K.H."/>
            <person name="Kim J.K."/>
            <person name="Bae C.S."/>
            <person name="Kim K.K."/>
        </authorList>
    </citation>
    <scope>NUCLEOTIDE SEQUENCE [MRNA]</scope>
    <scope>TISSUE SPECIFICITY</scope>
    <scope>DEVELOPMENTAL STAGE</scope>
    <scope>INTERACTION WITH PHYH</scope>
</reference>
<reference key="2">
    <citation type="journal article" date="2005" name="Science">
        <title>The transcriptional landscape of the mammalian genome.</title>
        <authorList>
            <person name="Carninci P."/>
            <person name="Kasukawa T."/>
            <person name="Katayama S."/>
            <person name="Gough J."/>
            <person name="Frith M.C."/>
            <person name="Maeda N."/>
            <person name="Oyama R."/>
            <person name="Ravasi T."/>
            <person name="Lenhard B."/>
            <person name="Wells C."/>
            <person name="Kodzius R."/>
            <person name="Shimokawa K."/>
            <person name="Bajic V.B."/>
            <person name="Brenner S.E."/>
            <person name="Batalov S."/>
            <person name="Forrest A.R."/>
            <person name="Zavolan M."/>
            <person name="Davis M.J."/>
            <person name="Wilming L.G."/>
            <person name="Aidinis V."/>
            <person name="Allen J.E."/>
            <person name="Ambesi-Impiombato A."/>
            <person name="Apweiler R."/>
            <person name="Aturaliya R.N."/>
            <person name="Bailey T.L."/>
            <person name="Bansal M."/>
            <person name="Baxter L."/>
            <person name="Beisel K.W."/>
            <person name="Bersano T."/>
            <person name="Bono H."/>
            <person name="Chalk A.M."/>
            <person name="Chiu K.P."/>
            <person name="Choudhary V."/>
            <person name="Christoffels A."/>
            <person name="Clutterbuck D.R."/>
            <person name="Crowe M.L."/>
            <person name="Dalla E."/>
            <person name="Dalrymple B.P."/>
            <person name="de Bono B."/>
            <person name="Della Gatta G."/>
            <person name="di Bernardo D."/>
            <person name="Down T."/>
            <person name="Engstrom P."/>
            <person name="Fagiolini M."/>
            <person name="Faulkner G."/>
            <person name="Fletcher C.F."/>
            <person name="Fukushima T."/>
            <person name="Furuno M."/>
            <person name="Futaki S."/>
            <person name="Gariboldi M."/>
            <person name="Georgii-Hemming P."/>
            <person name="Gingeras T.R."/>
            <person name="Gojobori T."/>
            <person name="Green R.E."/>
            <person name="Gustincich S."/>
            <person name="Harbers M."/>
            <person name="Hayashi Y."/>
            <person name="Hensch T.K."/>
            <person name="Hirokawa N."/>
            <person name="Hill D."/>
            <person name="Huminiecki L."/>
            <person name="Iacono M."/>
            <person name="Ikeo K."/>
            <person name="Iwama A."/>
            <person name="Ishikawa T."/>
            <person name="Jakt M."/>
            <person name="Kanapin A."/>
            <person name="Katoh M."/>
            <person name="Kawasawa Y."/>
            <person name="Kelso J."/>
            <person name="Kitamura H."/>
            <person name="Kitano H."/>
            <person name="Kollias G."/>
            <person name="Krishnan S.P."/>
            <person name="Kruger A."/>
            <person name="Kummerfeld S.K."/>
            <person name="Kurochkin I.V."/>
            <person name="Lareau L.F."/>
            <person name="Lazarevic D."/>
            <person name="Lipovich L."/>
            <person name="Liu J."/>
            <person name="Liuni S."/>
            <person name="McWilliam S."/>
            <person name="Madan Babu M."/>
            <person name="Madera M."/>
            <person name="Marchionni L."/>
            <person name="Matsuda H."/>
            <person name="Matsuzawa S."/>
            <person name="Miki H."/>
            <person name="Mignone F."/>
            <person name="Miyake S."/>
            <person name="Morris K."/>
            <person name="Mottagui-Tabar S."/>
            <person name="Mulder N."/>
            <person name="Nakano N."/>
            <person name="Nakauchi H."/>
            <person name="Ng P."/>
            <person name="Nilsson R."/>
            <person name="Nishiguchi S."/>
            <person name="Nishikawa S."/>
            <person name="Nori F."/>
            <person name="Ohara O."/>
            <person name="Okazaki Y."/>
            <person name="Orlando V."/>
            <person name="Pang K.C."/>
            <person name="Pavan W.J."/>
            <person name="Pavesi G."/>
            <person name="Pesole G."/>
            <person name="Petrovsky N."/>
            <person name="Piazza S."/>
            <person name="Reed J."/>
            <person name="Reid J.F."/>
            <person name="Ring B.Z."/>
            <person name="Ringwald M."/>
            <person name="Rost B."/>
            <person name="Ruan Y."/>
            <person name="Salzberg S.L."/>
            <person name="Sandelin A."/>
            <person name="Schneider C."/>
            <person name="Schoenbach C."/>
            <person name="Sekiguchi K."/>
            <person name="Semple C.A."/>
            <person name="Seno S."/>
            <person name="Sessa L."/>
            <person name="Sheng Y."/>
            <person name="Shibata Y."/>
            <person name="Shimada H."/>
            <person name="Shimada K."/>
            <person name="Silva D."/>
            <person name="Sinclair B."/>
            <person name="Sperling S."/>
            <person name="Stupka E."/>
            <person name="Sugiura K."/>
            <person name="Sultana R."/>
            <person name="Takenaka Y."/>
            <person name="Taki K."/>
            <person name="Tammoja K."/>
            <person name="Tan S.L."/>
            <person name="Tang S."/>
            <person name="Taylor M.S."/>
            <person name="Tegner J."/>
            <person name="Teichmann S.A."/>
            <person name="Ueda H.R."/>
            <person name="van Nimwegen E."/>
            <person name="Verardo R."/>
            <person name="Wei C.L."/>
            <person name="Yagi K."/>
            <person name="Yamanishi H."/>
            <person name="Zabarovsky E."/>
            <person name="Zhu S."/>
            <person name="Zimmer A."/>
            <person name="Hide W."/>
            <person name="Bult C."/>
            <person name="Grimmond S.M."/>
            <person name="Teasdale R.D."/>
            <person name="Liu E.T."/>
            <person name="Brusic V."/>
            <person name="Quackenbush J."/>
            <person name="Wahlestedt C."/>
            <person name="Mattick J.S."/>
            <person name="Hume D.A."/>
            <person name="Kai C."/>
            <person name="Sasaki D."/>
            <person name="Tomaru Y."/>
            <person name="Fukuda S."/>
            <person name="Kanamori-Katayama M."/>
            <person name="Suzuki M."/>
            <person name="Aoki J."/>
            <person name="Arakawa T."/>
            <person name="Iida J."/>
            <person name="Imamura K."/>
            <person name="Itoh M."/>
            <person name="Kato T."/>
            <person name="Kawaji H."/>
            <person name="Kawagashira N."/>
            <person name="Kawashima T."/>
            <person name="Kojima M."/>
            <person name="Kondo S."/>
            <person name="Konno H."/>
            <person name="Nakano K."/>
            <person name="Ninomiya N."/>
            <person name="Nishio T."/>
            <person name="Okada M."/>
            <person name="Plessy C."/>
            <person name="Shibata K."/>
            <person name="Shiraki T."/>
            <person name="Suzuki S."/>
            <person name="Tagami M."/>
            <person name="Waki K."/>
            <person name="Watahiki A."/>
            <person name="Okamura-Oho Y."/>
            <person name="Suzuki H."/>
            <person name="Kawai J."/>
            <person name="Hayashizaki Y."/>
        </authorList>
    </citation>
    <scope>NUCLEOTIDE SEQUENCE [LARGE SCALE MRNA]</scope>
    <source>
        <strain>C57BL/6J</strain>
        <tissue>Hippocampus</tissue>
    </source>
</reference>
<reference evidence="4" key="3">
    <citation type="journal article" date="2004" name="Genome Res.">
        <title>The status, quality, and expansion of the NIH full-length cDNA project: the Mammalian Gene Collection (MGC).</title>
        <authorList>
            <consortium name="The MGC Project Team"/>
        </authorList>
    </citation>
    <scope>NUCLEOTIDE SEQUENCE [LARGE SCALE MRNA]</scope>
    <source>
        <strain>C57BL/6J</strain>
        <tissue>Retina</tissue>
    </source>
</reference>
<reference key="4">
    <citation type="journal article" date="2001" name="Biochem. Biophys. Res. Commun.">
        <title>Cardiac characteristics of transgenic mice overexpressing Refsum disease gene-associated protein within the heart.</title>
        <authorList>
            <person name="Koh J.T."/>
            <person name="Choi H.H."/>
            <person name="Ahn K.Y."/>
            <person name="Kim J.U."/>
            <person name="Kim J.H."/>
            <person name="Chun J.-Y."/>
            <person name="Baik Y.H."/>
            <person name="Kim K.K."/>
        </authorList>
    </citation>
    <scope>OVEREXPRESSION IN HEART</scope>
</reference>
<reference key="5">
    <citation type="journal article" date="2001" name="Brain Res. Mol. Brain Res.">
        <title>Characterization of mouse brain-specific angiogenesis inhibitor 1 (BAI1) and phytanoyl-CoA alpha-hydroxylase-associated protein 1, a novel BAI1-binding protein.</title>
        <authorList>
            <person name="Koh J.T."/>
            <person name="Lee Z.H."/>
            <person name="Ahn K.Y."/>
            <person name="Kim J.-K."/>
            <person name="Bae C.S."/>
            <person name="Kim H.-H."/>
            <person name="Kee H.J."/>
            <person name="Kim K.K."/>
        </authorList>
    </citation>
    <scope>INTERACTION WITH ADGRB1</scope>
</reference>
<reference key="6">
    <citation type="journal article" date="2004" name="Biochem. Biophys. Res. Commun.">
        <title>Changes underlying arrhythmia in the transgenic heart overexpressing Refsum disease gene-associated protein.</title>
        <authorList>
            <person name="Koh J.T."/>
            <person name="Jeong B.C."/>
            <person name="Kim J.H."/>
            <person name="Ahn Y.K."/>
            <person name="Lee H.S."/>
            <person name="Baik Y.H."/>
            <person name="Kim K.K."/>
        </authorList>
    </citation>
    <scope>OVEREXPRESSION IN HEART</scope>
</reference>
<reference key="7">
    <citation type="journal article" date="2010" name="Cell">
        <title>A tissue-specific atlas of mouse protein phosphorylation and expression.</title>
        <authorList>
            <person name="Huttlin E.L."/>
            <person name="Jedrychowski M.P."/>
            <person name="Elias J.E."/>
            <person name="Goswami T."/>
            <person name="Rad R."/>
            <person name="Beausoleil S.A."/>
            <person name="Villen J."/>
            <person name="Haas W."/>
            <person name="Sowa M.E."/>
            <person name="Gygi S.P."/>
        </authorList>
    </citation>
    <scope>IDENTIFICATION BY MASS SPECTROMETRY [LARGE SCALE ANALYSIS]</scope>
    <source>
        <tissue>Brain</tissue>
    </source>
</reference>
<evidence type="ECO:0000255" key="1">
    <source>
        <dbReference type="PROSITE-ProRule" id="PRU00316"/>
    </source>
</evidence>
<evidence type="ECO:0000269" key="2">
    <source>
    </source>
</evidence>
<evidence type="ECO:0000269" key="3">
    <source>
    </source>
</evidence>
<evidence type="ECO:0000305" key="4"/>
<sequence length="330" mass="37555">MELLSTPHSIEINNITCDSFRISWAMEDSDLERVTHYFIDLNKKENKNSNKFKHRDVPTKLVAKAVPLPMTVRGHWFLSPRTEYSVAVQTAVKQSDGEYLVSGWSETVEFCTGDYAKEHLAQLQEKAEQIAGRMLRFSVFYRNHHKEYFQHARTHCGNVLQPYLKDNSGSHGSPTSGMLHGVFFSCNTEFNTGQPPQDSPYGRWRFQIPAQRLFNPSTNLYFADFYCMYTAYHYAILVLAPKGSLGDRFCRDRLPLLDIACNKFLTCSVEDGELIFRHAQDLILEIIYTEPVDLSLGTLGEISGHQLMSLSTADAKKDPSCKTCNISVGR</sequence>
<dbReference type="EMBL" id="AK049900">
    <property type="protein sequence ID" value="BAC33979.1"/>
    <property type="molecule type" value="mRNA"/>
</dbReference>
<dbReference type="EMBL" id="BC030494">
    <property type="protein sequence ID" value="AAH30494.2"/>
    <property type="status" value="ALT_INIT"/>
    <property type="molecule type" value="mRNA"/>
</dbReference>
<dbReference type="CCDS" id="CCDS36971.1"/>
<dbReference type="RefSeq" id="NP_666093.1">
    <property type="nucleotide sequence ID" value="NM_145981.3"/>
</dbReference>
<dbReference type="RefSeq" id="XP_006518442.1">
    <property type="nucleotide sequence ID" value="XM_006518379.5"/>
</dbReference>
<dbReference type="RefSeq" id="XP_006518443.1">
    <property type="nucleotide sequence ID" value="XM_006518380.4"/>
</dbReference>
<dbReference type="BioGRID" id="222893">
    <property type="interactions" value="11"/>
</dbReference>
<dbReference type="FunCoup" id="Q8K0S0">
    <property type="interactions" value="395"/>
</dbReference>
<dbReference type="IntAct" id="Q8K0S0">
    <property type="interactions" value="2"/>
</dbReference>
<dbReference type="MINT" id="Q8K0S0"/>
<dbReference type="STRING" id="10090.ENSMUSP00000003561"/>
<dbReference type="GlyCosmos" id="Q8K0S0">
    <property type="glycosylation" value="2 sites, No reported glycans"/>
</dbReference>
<dbReference type="GlyGen" id="Q8K0S0">
    <property type="glycosylation" value="2 sites, 1 N-linked glycan (1 site)"/>
</dbReference>
<dbReference type="iPTMnet" id="Q8K0S0"/>
<dbReference type="PhosphoSitePlus" id="Q8K0S0"/>
<dbReference type="SwissPalm" id="Q8K0S0"/>
<dbReference type="PaxDb" id="10090-ENSMUSP00000003561"/>
<dbReference type="ProteomicsDB" id="301818"/>
<dbReference type="Antibodypedia" id="5280">
    <property type="antibodies" value="106 antibodies from 22 providers"/>
</dbReference>
<dbReference type="Ensembl" id="ENSMUST00000003561.10">
    <property type="protein sequence ID" value="ENSMUSP00000003561.4"/>
    <property type="gene ID" value="ENSMUSG00000003469.10"/>
</dbReference>
<dbReference type="GeneID" id="105653"/>
<dbReference type="KEGG" id="mmu:105653"/>
<dbReference type="UCSC" id="uc007uoa.1">
    <property type="organism name" value="mouse"/>
</dbReference>
<dbReference type="AGR" id="MGI:1860417"/>
<dbReference type="CTD" id="9796"/>
<dbReference type="MGI" id="MGI:1860417">
    <property type="gene designation" value="Phyhip"/>
</dbReference>
<dbReference type="VEuPathDB" id="HostDB:ENSMUSG00000003469"/>
<dbReference type="eggNOG" id="ENOG502QQIT">
    <property type="taxonomic scope" value="Eukaryota"/>
</dbReference>
<dbReference type="GeneTree" id="ENSGT00390000014563"/>
<dbReference type="HOGENOM" id="CLU_054218_1_0_1"/>
<dbReference type="InParanoid" id="Q8K0S0"/>
<dbReference type="OMA" id="SPGDHFC"/>
<dbReference type="OrthoDB" id="6101761at2759"/>
<dbReference type="PhylomeDB" id="Q8K0S0"/>
<dbReference type="TreeFam" id="TF314485"/>
<dbReference type="BioGRID-ORCS" id="105653">
    <property type="hits" value="3 hits in 78 CRISPR screens"/>
</dbReference>
<dbReference type="PRO" id="PR:Q8K0S0"/>
<dbReference type="Proteomes" id="UP000000589">
    <property type="component" value="Chromosome 14"/>
</dbReference>
<dbReference type="RNAct" id="Q8K0S0">
    <property type="molecule type" value="protein"/>
</dbReference>
<dbReference type="Bgee" id="ENSMUSG00000003469">
    <property type="expression patterns" value="Expressed in dentate gyrus of hippocampal formation granule cell and 110 other cell types or tissues"/>
</dbReference>
<dbReference type="ExpressionAtlas" id="Q8K0S0">
    <property type="expression patterns" value="baseline and differential"/>
</dbReference>
<dbReference type="GO" id="GO:0005737">
    <property type="term" value="C:cytoplasm"/>
    <property type="evidence" value="ECO:0000250"/>
    <property type="project" value="UniProtKB"/>
</dbReference>
<dbReference type="GO" id="GO:1990782">
    <property type="term" value="F:protein tyrosine kinase binding"/>
    <property type="evidence" value="ECO:0007669"/>
    <property type="project" value="Ensembl"/>
</dbReference>
<dbReference type="GO" id="GO:0008104">
    <property type="term" value="P:protein localization"/>
    <property type="evidence" value="ECO:0000250"/>
    <property type="project" value="UniProtKB"/>
</dbReference>
<dbReference type="CDD" id="cd00063">
    <property type="entry name" value="FN3"/>
    <property type="match status" value="1"/>
</dbReference>
<dbReference type="FunFam" id="2.60.40.10:FF:000277">
    <property type="entry name" value="Phytanoyl-CoA hydroxylase-interacting protein-like protein"/>
    <property type="match status" value="1"/>
</dbReference>
<dbReference type="Gene3D" id="2.60.40.10">
    <property type="entry name" value="Immunoglobulins"/>
    <property type="match status" value="1"/>
</dbReference>
<dbReference type="InterPro" id="IPR003961">
    <property type="entry name" value="FN3_dom"/>
</dbReference>
<dbReference type="InterPro" id="IPR036116">
    <property type="entry name" value="FN3_sf"/>
</dbReference>
<dbReference type="InterPro" id="IPR013783">
    <property type="entry name" value="Ig-like_fold"/>
</dbReference>
<dbReference type="InterPro" id="IPR042868">
    <property type="entry name" value="PHYHIP/PHYHIPL"/>
</dbReference>
<dbReference type="InterPro" id="IPR045545">
    <property type="entry name" value="PHYIP/PHIPL_C"/>
</dbReference>
<dbReference type="PANTHER" id="PTHR15698:SF9">
    <property type="entry name" value="PHYTANOYL-COA HYDROXYLASE-INTERACTING PROTEIN"/>
    <property type="match status" value="1"/>
</dbReference>
<dbReference type="PANTHER" id="PTHR15698">
    <property type="entry name" value="PROTEIN CBG15099"/>
    <property type="match status" value="1"/>
</dbReference>
<dbReference type="Pfam" id="PF19281">
    <property type="entry name" value="PHYHIP_C"/>
    <property type="match status" value="1"/>
</dbReference>
<dbReference type="SUPFAM" id="SSF49265">
    <property type="entry name" value="Fibronectin type III"/>
    <property type="match status" value="1"/>
</dbReference>
<dbReference type="PROSITE" id="PS50853">
    <property type="entry name" value="FN3"/>
    <property type="match status" value="1"/>
</dbReference>
<accession>Q8K0S0</accession>
<keyword id="KW-0325">Glycoprotein</keyword>
<keyword id="KW-1185">Reference proteome</keyword>
<proteinExistence type="evidence at protein level"/>
<organism>
    <name type="scientific">Mus musculus</name>
    <name type="common">Mouse</name>
    <dbReference type="NCBI Taxonomy" id="10090"/>
    <lineage>
        <taxon>Eukaryota</taxon>
        <taxon>Metazoa</taxon>
        <taxon>Chordata</taxon>
        <taxon>Craniata</taxon>
        <taxon>Vertebrata</taxon>
        <taxon>Euteleostomi</taxon>
        <taxon>Mammalia</taxon>
        <taxon>Eutheria</taxon>
        <taxon>Euarchontoglires</taxon>
        <taxon>Glires</taxon>
        <taxon>Rodentia</taxon>
        <taxon>Myomorpha</taxon>
        <taxon>Muroidea</taxon>
        <taxon>Muridae</taxon>
        <taxon>Murinae</taxon>
        <taxon>Mus</taxon>
        <taxon>Mus</taxon>
    </lineage>
</organism>
<gene>
    <name type="primary">Phyhip</name>
</gene>
<comment type="function">
    <text>Its interaction with PHYH suggests a role in the development of the central system.</text>
</comment>
<comment type="subunit">
    <text evidence="2 3">Interacts with PHYH and ADGRB1.</text>
</comment>
<comment type="tissue specificity">
    <text evidence="2">Highly expressed in the brain.</text>
</comment>
<comment type="developmental stage">
    <text evidence="2">At 18 dpc, expressed in most tissues, particularly in the skin. By neonatal day 1, the expression in brain and skin is markedly increased, whereas expression in the heart and skeletal muscles shows steady state levels similar to those observed in the fetus. At adulthood, very high expression in brain, little or no expression in other tissues.</text>
</comment>
<comment type="miscellaneous">
    <text>Overexpression in heart induce atrial tachycardia and increased susceptibility to aconitine-induced arrhythmia, possibly due to altered expression of voltage-gated K(1+) channel and adrenergic beta1-receptor (ADRB1).</text>
</comment>
<comment type="similarity">
    <text evidence="4">Belongs to the PHYHIP family.</text>
</comment>
<comment type="sequence caution" evidence="4">
    <conflict type="erroneous initiation">
        <sequence resource="EMBL-CDS" id="AAH30494"/>
    </conflict>
</comment>